<proteinExistence type="inferred from homology"/>
<gene>
    <name evidence="1" type="primary">rbcL</name>
</gene>
<sequence length="488" mass="54133">MAQSVQERTRLKNKRYESGVIPYAKMGYWNPNYVVKDSDMLALFRVTPQPGVDPIEAAAAVAGESSTATWTVVWTDLLTACDVYRAKAYRVDPVPTAPDQYFVYIAYDIDLFEEGSIANLTASIIGNVFGFKAVKALRLEDMRIPFSYLKTFQGPATGVIVERERLNKFGRPLLGCTVKPKLGLSGKNYGRVVYEGLKGGLDFLKDDENINSQPFMRWRDRYLYVMEGVNRAAAASGEVKGSYLNVTAATMEECYKRAEFAKEVGSVIIMIDLVIGYTAIQTMAIWARENNMILHLHRAGNSTYSRQKNHGINFRVISKWMRMAGVDHIHAGTVVGKLEGDPIIIKGFYNTLLLPKLEVNLPQGLFFEMDWASLRKTLPVASGGIHAGQMHQLLHYLGEDVVLQFGGGTIGHPDGIQAGATANRVALEAMVLARNEGRDYFNEGPQILRDAAKNCGPLQTALDLWKDIAFNYTSTDTSDFVETPTANV</sequence>
<accession>Q85G81</accession>
<dbReference type="EC" id="4.1.1.39" evidence="1"/>
<dbReference type="EMBL" id="AB002583">
    <property type="protein sequence ID" value="BAC76107.1"/>
    <property type="molecule type" value="Genomic_DNA"/>
</dbReference>
<dbReference type="RefSeq" id="NP_848945.1">
    <property type="nucleotide sequence ID" value="NC_004799.1"/>
</dbReference>
<dbReference type="SMR" id="Q85G81"/>
<dbReference type="STRING" id="280699.Q85G81"/>
<dbReference type="EnsemblPlants" id="CMV013CT">
    <property type="protein sequence ID" value="CMV013CT"/>
    <property type="gene ID" value="CMV013C"/>
</dbReference>
<dbReference type="GeneID" id="844964"/>
<dbReference type="Gramene" id="CMV013CT">
    <property type="protein sequence ID" value="CMV013CT"/>
    <property type="gene ID" value="CMV013C"/>
</dbReference>
<dbReference type="KEGG" id="cme:CymeCp013"/>
<dbReference type="eggNOG" id="ENOG502QTI9">
    <property type="taxonomic scope" value="Eukaryota"/>
</dbReference>
<dbReference type="HOGENOM" id="CLU_031450_2_0_1"/>
<dbReference type="Proteomes" id="UP000007014">
    <property type="component" value="Chloroplast"/>
</dbReference>
<dbReference type="GO" id="GO:0009507">
    <property type="term" value="C:chloroplast"/>
    <property type="evidence" value="ECO:0007669"/>
    <property type="project" value="UniProtKB-SubCell"/>
</dbReference>
<dbReference type="GO" id="GO:0000287">
    <property type="term" value="F:magnesium ion binding"/>
    <property type="evidence" value="ECO:0007669"/>
    <property type="project" value="UniProtKB-UniRule"/>
</dbReference>
<dbReference type="GO" id="GO:0004497">
    <property type="term" value="F:monooxygenase activity"/>
    <property type="evidence" value="ECO:0007669"/>
    <property type="project" value="UniProtKB-KW"/>
</dbReference>
<dbReference type="GO" id="GO:0016984">
    <property type="term" value="F:ribulose-bisphosphate carboxylase activity"/>
    <property type="evidence" value="ECO:0007669"/>
    <property type="project" value="UniProtKB-UniRule"/>
</dbReference>
<dbReference type="GO" id="GO:0019253">
    <property type="term" value="P:reductive pentose-phosphate cycle"/>
    <property type="evidence" value="ECO:0007669"/>
    <property type="project" value="UniProtKB-UniRule"/>
</dbReference>
<dbReference type="CDD" id="cd08212">
    <property type="entry name" value="RuBisCO_large_I"/>
    <property type="match status" value="1"/>
</dbReference>
<dbReference type="Gene3D" id="3.20.20.110">
    <property type="entry name" value="Ribulose bisphosphate carboxylase, large subunit, C-terminal domain"/>
    <property type="match status" value="1"/>
</dbReference>
<dbReference type="Gene3D" id="3.30.70.150">
    <property type="entry name" value="RuBisCO large subunit, N-terminal domain"/>
    <property type="match status" value="1"/>
</dbReference>
<dbReference type="HAMAP" id="MF_01338">
    <property type="entry name" value="RuBisCO_L_type1"/>
    <property type="match status" value="1"/>
</dbReference>
<dbReference type="InterPro" id="IPR033966">
    <property type="entry name" value="RuBisCO"/>
</dbReference>
<dbReference type="InterPro" id="IPR020878">
    <property type="entry name" value="RuBisCo_large_chain_AS"/>
</dbReference>
<dbReference type="InterPro" id="IPR000685">
    <property type="entry name" value="RuBisCO_lsu_C"/>
</dbReference>
<dbReference type="InterPro" id="IPR036376">
    <property type="entry name" value="RuBisCO_lsu_C_sf"/>
</dbReference>
<dbReference type="InterPro" id="IPR017443">
    <property type="entry name" value="RuBisCO_lsu_fd_N"/>
</dbReference>
<dbReference type="InterPro" id="IPR036422">
    <property type="entry name" value="RuBisCO_lsu_N_sf"/>
</dbReference>
<dbReference type="InterPro" id="IPR020888">
    <property type="entry name" value="RuBisCO_lsuI"/>
</dbReference>
<dbReference type="NCBIfam" id="NF003252">
    <property type="entry name" value="PRK04208.1"/>
    <property type="match status" value="1"/>
</dbReference>
<dbReference type="PANTHER" id="PTHR42704">
    <property type="entry name" value="RIBULOSE BISPHOSPHATE CARBOXYLASE"/>
    <property type="match status" value="1"/>
</dbReference>
<dbReference type="PANTHER" id="PTHR42704:SF17">
    <property type="entry name" value="RIBULOSE BISPHOSPHATE CARBOXYLASE LARGE CHAIN"/>
    <property type="match status" value="1"/>
</dbReference>
<dbReference type="Pfam" id="PF00016">
    <property type="entry name" value="RuBisCO_large"/>
    <property type="match status" value="1"/>
</dbReference>
<dbReference type="Pfam" id="PF02788">
    <property type="entry name" value="RuBisCO_large_N"/>
    <property type="match status" value="1"/>
</dbReference>
<dbReference type="SFLD" id="SFLDG01052">
    <property type="entry name" value="RuBisCO"/>
    <property type="match status" value="1"/>
</dbReference>
<dbReference type="SFLD" id="SFLDS00014">
    <property type="entry name" value="RuBisCO"/>
    <property type="match status" value="1"/>
</dbReference>
<dbReference type="SFLD" id="SFLDG00301">
    <property type="entry name" value="RuBisCO-like_proteins"/>
    <property type="match status" value="1"/>
</dbReference>
<dbReference type="SUPFAM" id="SSF51649">
    <property type="entry name" value="RuBisCo, C-terminal domain"/>
    <property type="match status" value="1"/>
</dbReference>
<dbReference type="SUPFAM" id="SSF54966">
    <property type="entry name" value="RuBisCO, large subunit, small (N-terminal) domain"/>
    <property type="match status" value="1"/>
</dbReference>
<dbReference type="PROSITE" id="PS00157">
    <property type="entry name" value="RUBISCO_LARGE"/>
    <property type="match status" value="1"/>
</dbReference>
<geneLocation type="chloroplast"/>
<evidence type="ECO:0000255" key="1">
    <source>
        <dbReference type="HAMAP-Rule" id="MF_01338"/>
    </source>
</evidence>
<reference key="1">
    <citation type="journal article" date="2003" name="DNA Res.">
        <title>Complete sequence and analysis of the plastid genome of the unicellular red alga Cyanidioschyzon merolae.</title>
        <authorList>
            <person name="Ohta N."/>
            <person name="Matsuzaki M."/>
            <person name="Misumi O."/>
            <person name="Miyagishima S.-Y."/>
            <person name="Nozaki H."/>
            <person name="Tanaka K."/>
            <person name="Shin-i T."/>
            <person name="Kohara Y."/>
            <person name="Kuroiwa T."/>
        </authorList>
    </citation>
    <scope>NUCLEOTIDE SEQUENCE [LARGE SCALE GENOMIC DNA]</scope>
    <source>
        <strain>NIES-3377 / 10D</strain>
    </source>
</reference>
<feature type="chain" id="PRO_0000062432" description="Ribulose bisphosphate carboxylase large chain">
    <location>
        <begin position="1"/>
        <end position="488"/>
    </location>
</feature>
<feature type="active site" description="Proton acceptor" evidence="1">
    <location>
        <position position="179"/>
    </location>
</feature>
<feature type="active site" description="Proton acceptor" evidence="1">
    <location>
        <position position="297"/>
    </location>
</feature>
<feature type="binding site" description="in homodimeric partner" evidence="1">
    <location>
        <position position="127"/>
    </location>
    <ligand>
        <name>substrate</name>
    </ligand>
</feature>
<feature type="binding site" evidence="1">
    <location>
        <position position="177"/>
    </location>
    <ligand>
        <name>substrate</name>
    </ligand>
</feature>
<feature type="binding site" evidence="1">
    <location>
        <position position="181"/>
    </location>
    <ligand>
        <name>substrate</name>
    </ligand>
</feature>
<feature type="binding site" description="via carbamate group" evidence="1">
    <location>
        <position position="205"/>
    </location>
    <ligand>
        <name>Mg(2+)</name>
        <dbReference type="ChEBI" id="CHEBI:18420"/>
    </ligand>
</feature>
<feature type="binding site" evidence="1">
    <location>
        <position position="207"/>
    </location>
    <ligand>
        <name>Mg(2+)</name>
        <dbReference type="ChEBI" id="CHEBI:18420"/>
    </ligand>
</feature>
<feature type="binding site" evidence="1">
    <location>
        <position position="208"/>
    </location>
    <ligand>
        <name>Mg(2+)</name>
        <dbReference type="ChEBI" id="CHEBI:18420"/>
    </ligand>
</feature>
<feature type="binding site" evidence="1">
    <location>
        <position position="298"/>
    </location>
    <ligand>
        <name>substrate</name>
    </ligand>
</feature>
<feature type="binding site" evidence="1">
    <location>
        <position position="330"/>
    </location>
    <ligand>
        <name>substrate</name>
    </ligand>
</feature>
<feature type="binding site" evidence="1">
    <location>
        <position position="382"/>
    </location>
    <ligand>
        <name>substrate</name>
    </ligand>
</feature>
<feature type="site" description="Transition state stabilizer" evidence="1">
    <location>
        <position position="337"/>
    </location>
</feature>
<feature type="modified residue" description="N6-carboxylysine" evidence="1">
    <location>
        <position position="205"/>
    </location>
</feature>
<organism>
    <name type="scientific">Cyanidioschyzon merolae (strain NIES-3377 / 10D)</name>
    <name type="common">Unicellular red alga</name>
    <dbReference type="NCBI Taxonomy" id="280699"/>
    <lineage>
        <taxon>Eukaryota</taxon>
        <taxon>Rhodophyta</taxon>
        <taxon>Bangiophyceae</taxon>
        <taxon>Cyanidiales</taxon>
        <taxon>Cyanidiaceae</taxon>
        <taxon>Cyanidioschyzon</taxon>
    </lineage>
</organism>
<keyword id="KW-0113">Calvin cycle</keyword>
<keyword id="KW-0120">Carbon dioxide fixation</keyword>
<keyword id="KW-0150">Chloroplast</keyword>
<keyword id="KW-0456">Lyase</keyword>
<keyword id="KW-0460">Magnesium</keyword>
<keyword id="KW-0479">Metal-binding</keyword>
<keyword id="KW-0503">Monooxygenase</keyword>
<keyword id="KW-0560">Oxidoreductase</keyword>
<keyword id="KW-0601">Photorespiration</keyword>
<keyword id="KW-0602">Photosynthesis</keyword>
<keyword id="KW-0934">Plastid</keyword>
<keyword id="KW-1185">Reference proteome</keyword>
<protein>
    <recommendedName>
        <fullName evidence="1">Ribulose bisphosphate carboxylase large chain</fullName>
        <shortName evidence="1">RuBisCO large subunit</shortName>
        <ecNumber evidence="1">4.1.1.39</ecNumber>
    </recommendedName>
</protein>
<name>RBL_CYAM1</name>
<comment type="function">
    <text evidence="1">RuBisCO catalyzes two reactions: the carboxylation of D-ribulose 1,5-bisphosphate, the primary event in carbon dioxide fixation, as well as the oxidative fragmentation of the pentose substrate in the photorespiration process. Both reactions occur simultaneously and in competition at the same active site.</text>
</comment>
<comment type="catalytic activity">
    <reaction evidence="1">
        <text>2 (2R)-3-phosphoglycerate + 2 H(+) = D-ribulose 1,5-bisphosphate + CO2 + H2O</text>
        <dbReference type="Rhea" id="RHEA:23124"/>
        <dbReference type="ChEBI" id="CHEBI:15377"/>
        <dbReference type="ChEBI" id="CHEBI:15378"/>
        <dbReference type="ChEBI" id="CHEBI:16526"/>
        <dbReference type="ChEBI" id="CHEBI:57870"/>
        <dbReference type="ChEBI" id="CHEBI:58272"/>
        <dbReference type="EC" id="4.1.1.39"/>
    </reaction>
</comment>
<comment type="catalytic activity">
    <reaction evidence="1">
        <text>D-ribulose 1,5-bisphosphate + O2 = 2-phosphoglycolate + (2R)-3-phosphoglycerate + 2 H(+)</text>
        <dbReference type="Rhea" id="RHEA:36631"/>
        <dbReference type="ChEBI" id="CHEBI:15378"/>
        <dbReference type="ChEBI" id="CHEBI:15379"/>
        <dbReference type="ChEBI" id="CHEBI:57870"/>
        <dbReference type="ChEBI" id="CHEBI:58033"/>
        <dbReference type="ChEBI" id="CHEBI:58272"/>
    </reaction>
</comment>
<comment type="cofactor">
    <cofactor evidence="1">
        <name>Mg(2+)</name>
        <dbReference type="ChEBI" id="CHEBI:18420"/>
    </cofactor>
    <text evidence="1">Binds 1 Mg(2+) ion per subunit.</text>
</comment>
<comment type="subunit">
    <text evidence="1">Heterohexadecamer of 8 large chains and 8 small chains.</text>
</comment>
<comment type="subcellular location">
    <subcellularLocation>
        <location>Plastid</location>
        <location>Chloroplast</location>
    </subcellularLocation>
</comment>
<comment type="miscellaneous">
    <text evidence="1">The basic functional RuBisCO is composed of a large chain homodimer in a 'head-to-tail' conformation. In form I RuBisCO this homodimer is arranged in a barrel-like tetramer with the small subunits forming a tetrameric 'cap' on each end of the 'barrel'.</text>
</comment>
<comment type="similarity">
    <text evidence="1">Belongs to the RuBisCO large chain family. Type I subfamily.</text>
</comment>